<name>RLMKL_PROMH</name>
<proteinExistence type="inferred from homology"/>
<gene>
    <name evidence="1" type="primary">rlmL</name>
    <name type="ordered locus">PMI0774</name>
</gene>
<reference key="1">
    <citation type="journal article" date="2008" name="J. Bacteriol.">
        <title>Complete genome sequence of uropathogenic Proteus mirabilis, a master of both adherence and motility.</title>
        <authorList>
            <person name="Pearson M.M."/>
            <person name="Sebaihia M."/>
            <person name="Churcher C."/>
            <person name="Quail M.A."/>
            <person name="Seshasayee A.S."/>
            <person name="Luscombe N.M."/>
            <person name="Abdellah Z."/>
            <person name="Arrosmith C."/>
            <person name="Atkin B."/>
            <person name="Chillingworth T."/>
            <person name="Hauser H."/>
            <person name="Jagels K."/>
            <person name="Moule S."/>
            <person name="Mungall K."/>
            <person name="Norbertczak H."/>
            <person name="Rabbinowitsch E."/>
            <person name="Walker D."/>
            <person name="Whithead S."/>
            <person name="Thomson N.R."/>
            <person name="Rather P.N."/>
            <person name="Parkhill J."/>
            <person name="Mobley H.L.T."/>
        </authorList>
    </citation>
    <scope>NUCLEOTIDE SEQUENCE [LARGE SCALE GENOMIC DNA]</scope>
    <source>
        <strain>HI4320</strain>
    </source>
</reference>
<dbReference type="EC" id="2.1.1.173" evidence="1"/>
<dbReference type="EC" id="2.1.1.264" evidence="1"/>
<dbReference type="EMBL" id="AM942759">
    <property type="protein sequence ID" value="CAR41773.1"/>
    <property type="molecule type" value="Genomic_DNA"/>
</dbReference>
<dbReference type="SMR" id="B4EVC6"/>
<dbReference type="EnsemblBacteria" id="CAR41773">
    <property type="protein sequence ID" value="CAR41773"/>
    <property type="gene ID" value="PMI0774"/>
</dbReference>
<dbReference type="GeneID" id="6801522"/>
<dbReference type="KEGG" id="pmr:PMI0774"/>
<dbReference type="eggNOG" id="COG0116">
    <property type="taxonomic scope" value="Bacteria"/>
</dbReference>
<dbReference type="eggNOG" id="COG1092">
    <property type="taxonomic scope" value="Bacteria"/>
</dbReference>
<dbReference type="HOGENOM" id="CLU_014042_2_0_6"/>
<dbReference type="Proteomes" id="UP000008319">
    <property type="component" value="Chromosome"/>
</dbReference>
<dbReference type="GO" id="GO:0005737">
    <property type="term" value="C:cytoplasm"/>
    <property type="evidence" value="ECO:0007669"/>
    <property type="project" value="UniProtKB-SubCell"/>
</dbReference>
<dbReference type="GO" id="GO:0052915">
    <property type="term" value="F:23S rRNA (guanine(2445)-N(2))-methyltransferase activity"/>
    <property type="evidence" value="ECO:0007669"/>
    <property type="project" value="UniProtKB-UniRule"/>
</dbReference>
<dbReference type="GO" id="GO:0003723">
    <property type="term" value="F:RNA binding"/>
    <property type="evidence" value="ECO:0007669"/>
    <property type="project" value="UniProtKB-KW"/>
</dbReference>
<dbReference type="GO" id="GO:0070043">
    <property type="term" value="F:rRNA (guanine-N7-)-methyltransferase activity"/>
    <property type="evidence" value="ECO:0007669"/>
    <property type="project" value="UniProtKB-UniRule"/>
</dbReference>
<dbReference type="CDD" id="cd02440">
    <property type="entry name" value="AdoMet_MTases"/>
    <property type="match status" value="2"/>
</dbReference>
<dbReference type="CDD" id="cd11715">
    <property type="entry name" value="THUMP_AdoMetMT"/>
    <property type="match status" value="1"/>
</dbReference>
<dbReference type="FunFam" id="3.30.750.80:FF:000001">
    <property type="entry name" value="Ribosomal RNA large subunit methyltransferase K/L"/>
    <property type="match status" value="1"/>
</dbReference>
<dbReference type="FunFam" id="3.40.50.150:FF:000039">
    <property type="entry name" value="Ribosomal RNA large subunit methyltransferase K/L"/>
    <property type="match status" value="1"/>
</dbReference>
<dbReference type="Gene3D" id="3.30.2130.30">
    <property type="match status" value="1"/>
</dbReference>
<dbReference type="Gene3D" id="3.30.750.80">
    <property type="entry name" value="RNA methyltransferase domain (HRMD) like"/>
    <property type="match status" value="1"/>
</dbReference>
<dbReference type="Gene3D" id="3.40.50.150">
    <property type="entry name" value="Vaccinia Virus protein VP39"/>
    <property type="match status" value="2"/>
</dbReference>
<dbReference type="HAMAP" id="MF_01858">
    <property type="entry name" value="23SrRNA_methyltr_KL"/>
    <property type="match status" value="1"/>
</dbReference>
<dbReference type="InterPro" id="IPR017244">
    <property type="entry name" value="23SrRNA_methyltr_KL"/>
</dbReference>
<dbReference type="InterPro" id="IPR002052">
    <property type="entry name" value="DNA_methylase_N6_adenine_CS"/>
</dbReference>
<dbReference type="InterPro" id="IPR000241">
    <property type="entry name" value="RlmKL-like_Mtase"/>
</dbReference>
<dbReference type="InterPro" id="IPR053943">
    <property type="entry name" value="RlmKL-like_Mtase_CS"/>
</dbReference>
<dbReference type="InterPro" id="IPR054170">
    <property type="entry name" value="RlmL_1st"/>
</dbReference>
<dbReference type="InterPro" id="IPR019614">
    <property type="entry name" value="SAM-dep_methyl-trfase"/>
</dbReference>
<dbReference type="InterPro" id="IPR029063">
    <property type="entry name" value="SAM-dependent_MTases_sf"/>
</dbReference>
<dbReference type="InterPro" id="IPR004114">
    <property type="entry name" value="THUMP_dom"/>
</dbReference>
<dbReference type="NCBIfam" id="NF008748">
    <property type="entry name" value="PRK11783.1"/>
    <property type="match status" value="1"/>
</dbReference>
<dbReference type="PANTHER" id="PTHR47313">
    <property type="entry name" value="RIBOSOMAL RNA LARGE SUBUNIT METHYLTRANSFERASE K/L"/>
    <property type="match status" value="1"/>
</dbReference>
<dbReference type="PANTHER" id="PTHR47313:SF1">
    <property type="entry name" value="RIBOSOMAL RNA LARGE SUBUNIT METHYLTRANSFERASE K_L"/>
    <property type="match status" value="1"/>
</dbReference>
<dbReference type="Pfam" id="PF10672">
    <property type="entry name" value="Methyltrans_SAM"/>
    <property type="match status" value="1"/>
</dbReference>
<dbReference type="Pfam" id="PF22020">
    <property type="entry name" value="RlmL_1st"/>
    <property type="match status" value="1"/>
</dbReference>
<dbReference type="Pfam" id="PF02926">
    <property type="entry name" value="THUMP"/>
    <property type="match status" value="1"/>
</dbReference>
<dbReference type="Pfam" id="PF01170">
    <property type="entry name" value="UPF0020"/>
    <property type="match status" value="1"/>
</dbReference>
<dbReference type="PIRSF" id="PIRSF037618">
    <property type="entry name" value="RNA_Mtase_bacteria_prd"/>
    <property type="match status" value="1"/>
</dbReference>
<dbReference type="SMART" id="SM00981">
    <property type="entry name" value="THUMP"/>
    <property type="match status" value="1"/>
</dbReference>
<dbReference type="SUPFAM" id="SSF53335">
    <property type="entry name" value="S-adenosyl-L-methionine-dependent methyltransferases"/>
    <property type="match status" value="2"/>
</dbReference>
<dbReference type="PROSITE" id="PS51165">
    <property type="entry name" value="THUMP"/>
    <property type="match status" value="1"/>
</dbReference>
<dbReference type="PROSITE" id="PS01261">
    <property type="entry name" value="UPF0020"/>
    <property type="match status" value="1"/>
</dbReference>
<feature type="chain" id="PRO_0000366782" description="Ribosomal RNA large subunit methyltransferase K/L">
    <location>
        <begin position="1"/>
        <end position="704"/>
    </location>
</feature>
<feature type="domain" description="THUMP" evidence="1">
    <location>
        <begin position="43"/>
        <end position="154"/>
    </location>
</feature>
<sequence>MRSLFASTGRGLEELLKTELEHLGAQSCQITQGGVYFRADDKTMYQSLLWSRLASRIMLPLNEFNVYSDLDLYLGVQAIDWSEVFTVNHTFAIHFNGTNDVIRNSQYGALKAKDAIVDSFQRKIGQRPDVAKQSPDIRLTIHLHKEKASLSLDLSGDGLHQRGYRDLTGQAPLKENLAAAIIMRSGWKTDTPLIDPMCGSGTLLIEAAMMATDCAPALNRVHWGFRHWLGHNEALWKEVTHEAFARFREGKKNTQARFYGFDVDKRVLDMARANARRADVADLITFTQGDAAKLTNPVSTGVKGTIISNPPYGERLESEPALIALHSQLGRAVKAHFPGWRLSLFSASPELLSCIQLRAEREFKAKNGPLDCVQKNYLLSETPSTINTRLAEDFANRLRKNEKKLAKWAKQQQIECYRLYDADLPEYNVAVDRYGEKVVIQEYAPPKTINEHKARQRLFDVISATMEVLALRSDQLILKTRQRQKGKQQYEKMAEKGDFFLVDEFGAKFWVNLTDYLDTGLFLDHRIARKMLGEMSKGKDFLNLFAYTGSASVHAGLGGAKSTTTVDMSRTYLEWAEKNFQANGLSGRQHRLMQADCLQWLSQSNEQFDVIFIDPPTFSNSKRMENTFDVQRDHIELMKHLKRLLRKGGTIMFSNNKRGFKMDHEALANIGLTAKEITQKTLSQDFARNRQIHNCWLLNHAGEE</sequence>
<protein>
    <recommendedName>
        <fullName evidence="1">Ribosomal RNA large subunit methyltransferase K/L</fullName>
    </recommendedName>
    <domain>
        <recommendedName>
            <fullName evidence="1">23S rRNA m2G2445 methyltransferase</fullName>
            <ecNumber evidence="1">2.1.1.173</ecNumber>
        </recommendedName>
        <alternativeName>
            <fullName evidence="1">rRNA (guanine-N(2)-)-methyltransferase RlmL</fullName>
        </alternativeName>
    </domain>
    <domain>
        <recommendedName>
            <fullName evidence="1">23S rRNA m7G2069 methyltransferase</fullName>
            <ecNumber evidence="1">2.1.1.264</ecNumber>
        </recommendedName>
        <alternativeName>
            <fullName evidence="1">rRNA (guanine-N(7)-)-methyltransferase RlmK</fullName>
        </alternativeName>
    </domain>
</protein>
<organism>
    <name type="scientific">Proteus mirabilis (strain HI4320)</name>
    <dbReference type="NCBI Taxonomy" id="529507"/>
    <lineage>
        <taxon>Bacteria</taxon>
        <taxon>Pseudomonadati</taxon>
        <taxon>Pseudomonadota</taxon>
        <taxon>Gammaproteobacteria</taxon>
        <taxon>Enterobacterales</taxon>
        <taxon>Morganellaceae</taxon>
        <taxon>Proteus</taxon>
    </lineage>
</organism>
<comment type="function">
    <text evidence="1">Specifically methylates the guanine in position 2445 (m2G2445) and the guanine in position 2069 (m7G2069) of 23S rRNA.</text>
</comment>
<comment type="catalytic activity">
    <reaction evidence="1">
        <text>guanosine(2445) in 23S rRNA + S-adenosyl-L-methionine = N(2)-methylguanosine(2445) in 23S rRNA + S-adenosyl-L-homocysteine + H(+)</text>
        <dbReference type="Rhea" id="RHEA:42740"/>
        <dbReference type="Rhea" id="RHEA-COMP:10215"/>
        <dbReference type="Rhea" id="RHEA-COMP:10216"/>
        <dbReference type="ChEBI" id="CHEBI:15378"/>
        <dbReference type="ChEBI" id="CHEBI:57856"/>
        <dbReference type="ChEBI" id="CHEBI:59789"/>
        <dbReference type="ChEBI" id="CHEBI:74269"/>
        <dbReference type="ChEBI" id="CHEBI:74481"/>
        <dbReference type="EC" id="2.1.1.173"/>
    </reaction>
</comment>
<comment type="catalytic activity">
    <reaction evidence="1">
        <text>guanosine(2069) in 23S rRNA + S-adenosyl-L-methionine = N(2)-methylguanosine(2069) in 23S rRNA + S-adenosyl-L-homocysteine + H(+)</text>
        <dbReference type="Rhea" id="RHEA:43772"/>
        <dbReference type="Rhea" id="RHEA-COMP:10688"/>
        <dbReference type="Rhea" id="RHEA-COMP:10689"/>
        <dbReference type="ChEBI" id="CHEBI:15378"/>
        <dbReference type="ChEBI" id="CHEBI:57856"/>
        <dbReference type="ChEBI" id="CHEBI:59789"/>
        <dbReference type="ChEBI" id="CHEBI:74269"/>
        <dbReference type="ChEBI" id="CHEBI:74481"/>
        <dbReference type="EC" id="2.1.1.264"/>
    </reaction>
</comment>
<comment type="subcellular location">
    <subcellularLocation>
        <location evidence="1">Cytoplasm</location>
    </subcellularLocation>
</comment>
<comment type="similarity">
    <text evidence="1">Belongs to the methyltransferase superfamily. RlmKL family.</text>
</comment>
<evidence type="ECO:0000255" key="1">
    <source>
        <dbReference type="HAMAP-Rule" id="MF_01858"/>
    </source>
</evidence>
<keyword id="KW-0963">Cytoplasm</keyword>
<keyword id="KW-0489">Methyltransferase</keyword>
<keyword id="KW-1185">Reference proteome</keyword>
<keyword id="KW-0694">RNA-binding</keyword>
<keyword id="KW-0698">rRNA processing</keyword>
<keyword id="KW-0949">S-adenosyl-L-methionine</keyword>
<keyword id="KW-0808">Transferase</keyword>
<accession>B4EVC6</accession>